<organism>
    <name type="scientific">Escherichia coli O8 (strain IAI1)</name>
    <dbReference type="NCBI Taxonomy" id="585034"/>
    <lineage>
        <taxon>Bacteria</taxon>
        <taxon>Pseudomonadati</taxon>
        <taxon>Pseudomonadota</taxon>
        <taxon>Gammaproteobacteria</taxon>
        <taxon>Enterobacterales</taxon>
        <taxon>Enterobacteriaceae</taxon>
        <taxon>Escherichia</taxon>
    </lineage>
</organism>
<gene>
    <name evidence="1" type="primary">gpmA</name>
    <name type="ordered locus">ECIAI1_0723</name>
</gene>
<keyword id="KW-0312">Gluconeogenesis</keyword>
<keyword id="KW-0324">Glycolysis</keyword>
<keyword id="KW-0413">Isomerase</keyword>
<proteinExistence type="inferred from homology"/>
<feature type="chain" id="PRO_1000135946" description="2,3-bisphosphoglycerate-dependent phosphoglycerate mutase">
    <location>
        <begin position="1"/>
        <end position="250"/>
    </location>
</feature>
<feature type="active site" description="Tele-phosphohistidine intermediate" evidence="1">
    <location>
        <position position="11"/>
    </location>
</feature>
<feature type="active site" description="Proton donor/acceptor" evidence="1">
    <location>
        <position position="89"/>
    </location>
</feature>
<feature type="binding site" evidence="1">
    <location>
        <begin position="10"/>
        <end position="17"/>
    </location>
    <ligand>
        <name>substrate</name>
    </ligand>
</feature>
<feature type="binding site" evidence="1">
    <location>
        <begin position="23"/>
        <end position="24"/>
    </location>
    <ligand>
        <name>substrate</name>
    </ligand>
</feature>
<feature type="binding site" evidence="1">
    <location>
        <position position="62"/>
    </location>
    <ligand>
        <name>substrate</name>
    </ligand>
</feature>
<feature type="binding site" evidence="1">
    <location>
        <begin position="89"/>
        <end position="92"/>
    </location>
    <ligand>
        <name>substrate</name>
    </ligand>
</feature>
<feature type="binding site" evidence="1">
    <location>
        <position position="100"/>
    </location>
    <ligand>
        <name>substrate</name>
    </ligand>
</feature>
<feature type="binding site" evidence="1">
    <location>
        <begin position="116"/>
        <end position="117"/>
    </location>
    <ligand>
        <name>substrate</name>
    </ligand>
</feature>
<feature type="binding site" evidence="1">
    <location>
        <begin position="185"/>
        <end position="186"/>
    </location>
    <ligand>
        <name>substrate</name>
    </ligand>
</feature>
<feature type="site" description="Transition state stabilizer" evidence="1">
    <location>
        <position position="184"/>
    </location>
</feature>
<protein>
    <recommendedName>
        <fullName evidence="1">2,3-bisphosphoglycerate-dependent phosphoglycerate mutase</fullName>
        <shortName evidence="1">BPG-dependent PGAM</shortName>
        <shortName evidence="1">PGAM</shortName>
        <shortName evidence="1">Phosphoglyceromutase</shortName>
        <shortName evidence="1">dPGM</shortName>
        <ecNumber evidence="1">5.4.2.11</ecNumber>
    </recommendedName>
</protein>
<sequence>MAVTKLVLVRHGESQWNKENRFTGWYDVDLSEKGVSEAKAAGKLLKEEGYSFDFAYTSVLKRAIHTLWNVLDELDQAWLPVEKSWKLNERHYGALQGLNKAETAEKYGDEQVKQWRRGFAVTPPELTKDDERYPGHDPRYAKLSEKELPLTESLALTIDRVIPYWNETILPRMKSGERVIIAAHGNSLRALVKYLDNMSEEEILELNIPTGVPLVYEFDENFKPLKRYYLGNADEIAAKAAAVANQGKAK</sequence>
<name>GPMA_ECO8A</name>
<comment type="function">
    <text evidence="1">Catalyzes the interconversion of 2-phosphoglycerate and 3-phosphoglycerate.</text>
</comment>
<comment type="catalytic activity">
    <reaction evidence="1">
        <text>(2R)-2-phosphoglycerate = (2R)-3-phosphoglycerate</text>
        <dbReference type="Rhea" id="RHEA:15901"/>
        <dbReference type="ChEBI" id="CHEBI:58272"/>
        <dbReference type="ChEBI" id="CHEBI:58289"/>
        <dbReference type="EC" id="5.4.2.11"/>
    </reaction>
</comment>
<comment type="pathway">
    <text evidence="1">Carbohydrate degradation; glycolysis; pyruvate from D-glyceraldehyde 3-phosphate: step 3/5.</text>
</comment>
<comment type="subunit">
    <text evidence="1">Homodimer.</text>
</comment>
<comment type="similarity">
    <text evidence="1">Belongs to the phosphoglycerate mutase family. BPG-dependent PGAM subfamily.</text>
</comment>
<evidence type="ECO:0000255" key="1">
    <source>
        <dbReference type="HAMAP-Rule" id="MF_01039"/>
    </source>
</evidence>
<reference key="1">
    <citation type="journal article" date="2009" name="PLoS Genet.">
        <title>Organised genome dynamics in the Escherichia coli species results in highly diverse adaptive paths.</title>
        <authorList>
            <person name="Touchon M."/>
            <person name="Hoede C."/>
            <person name="Tenaillon O."/>
            <person name="Barbe V."/>
            <person name="Baeriswyl S."/>
            <person name="Bidet P."/>
            <person name="Bingen E."/>
            <person name="Bonacorsi S."/>
            <person name="Bouchier C."/>
            <person name="Bouvet O."/>
            <person name="Calteau A."/>
            <person name="Chiapello H."/>
            <person name="Clermont O."/>
            <person name="Cruveiller S."/>
            <person name="Danchin A."/>
            <person name="Diard M."/>
            <person name="Dossat C."/>
            <person name="Karoui M.E."/>
            <person name="Frapy E."/>
            <person name="Garry L."/>
            <person name="Ghigo J.M."/>
            <person name="Gilles A.M."/>
            <person name="Johnson J."/>
            <person name="Le Bouguenec C."/>
            <person name="Lescat M."/>
            <person name="Mangenot S."/>
            <person name="Martinez-Jehanne V."/>
            <person name="Matic I."/>
            <person name="Nassif X."/>
            <person name="Oztas S."/>
            <person name="Petit M.A."/>
            <person name="Pichon C."/>
            <person name="Rouy Z."/>
            <person name="Ruf C.S."/>
            <person name="Schneider D."/>
            <person name="Tourret J."/>
            <person name="Vacherie B."/>
            <person name="Vallenet D."/>
            <person name="Medigue C."/>
            <person name="Rocha E.P.C."/>
            <person name="Denamur E."/>
        </authorList>
    </citation>
    <scope>NUCLEOTIDE SEQUENCE [LARGE SCALE GENOMIC DNA]</scope>
    <source>
        <strain>IAI1</strain>
    </source>
</reference>
<accession>B7M6B8</accession>
<dbReference type="EC" id="5.4.2.11" evidence="1"/>
<dbReference type="EMBL" id="CU928160">
    <property type="protein sequence ID" value="CAQ97590.1"/>
    <property type="molecule type" value="Genomic_DNA"/>
</dbReference>
<dbReference type="RefSeq" id="WP_001295305.1">
    <property type="nucleotide sequence ID" value="NC_011741.1"/>
</dbReference>
<dbReference type="SMR" id="B7M6B8"/>
<dbReference type="GeneID" id="93776726"/>
<dbReference type="KEGG" id="ecr:ECIAI1_0723"/>
<dbReference type="HOGENOM" id="CLU_033323_1_1_6"/>
<dbReference type="UniPathway" id="UPA00109">
    <property type="reaction ID" value="UER00186"/>
</dbReference>
<dbReference type="GO" id="GO:0004619">
    <property type="term" value="F:phosphoglycerate mutase activity"/>
    <property type="evidence" value="ECO:0007669"/>
    <property type="project" value="UniProtKB-EC"/>
</dbReference>
<dbReference type="GO" id="GO:0006094">
    <property type="term" value="P:gluconeogenesis"/>
    <property type="evidence" value="ECO:0007669"/>
    <property type="project" value="UniProtKB-UniRule"/>
</dbReference>
<dbReference type="GO" id="GO:0006096">
    <property type="term" value="P:glycolytic process"/>
    <property type="evidence" value="ECO:0007669"/>
    <property type="project" value="UniProtKB-UniRule"/>
</dbReference>
<dbReference type="CDD" id="cd07067">
    <property type="entry name" value="HP_PGM_like"/>
    <property type="match status" value="1"/>
</dbReference>
<dbReference type="FunFam" id="3.40.50.1240:FF:000003">
    <property type="entry name" value="2,3-bisphosphoglycerate-dependent phosphoglycerate mutase"/>
    <property type="match status" value="1"/>
</dbReference>
<dbReference type="Gene3D" id="3.40.50.1240">
    <property type="entry name" value="Phosphoglycerate mutase-like"/>
    <property type="match status" value="1"/>
</dbReference>
<dbReference type="HAMAP" id="MF_01039">
    <property type="entry name" value="PGAM_GpmA"/>
    <property type="match status" value="1"/>
</dbReference>
<dbReference type="InterPro" id="IPR013078">
    <property type="entry name" value="His_Pase_superF_clade-1"/>
</dbReference>
<dbReference type="InterPro" id="IPR029033">
    <property type="entry name" value="His_PPase_superfam"/>
</dbReference>
<dbReference type="InterPro" id="IPR001345">
    <property type="entry name" value="PG/BPGM_mutase_AS"/>
</dbReference>
<dbReference type="InterPro" id="IPR005952">
    <property type="entry name" value="Phosphogly_mut1"/>
</dbReference>
<dbReference type="NCBIfam" id="TIGR01258">
    <property type="entry name" value="pgm_1"/>
    <property type="match status" value="1"/>
</dbReference>
<dbReference type="NCBIfam" id="NF010713">
    <property type="entry name" value="PRK14115.1"/>
    <property type="match status" value="1"/>
</dbReference>
<dbReference type="PANTHER" id="PTHR11931">
    <property type="entry name" value="PHOSPHOGLYCERATE MUTASE"/>
    <property type="match status" value="1"/>
</dbReference>
<dbReference type="Pfam" id="PF00300">
    <property type="entry name" value="His_Phos_1"/>
    <property type="match status" value="1"/>
</dbReference>
<dbReference type="PIRSF" id="PIRSF000709">
    <property type="entry name" value="6PFK_2-Ptase"/>
    <property type="match status" value="1"/>
</dbReference>
<dbReference type="SMART" id="SM00855">
    <property type="entry name" value="PGAM"/>
    <property type="match status" value="1"/>
</dbReference>
<dbReference type="SUPFAM" id="SSF53254">
    <property type="entry name" value="Phosphoglycerate mutase-like"/>
    <property type="match status" value="1"/>
</dbReference>
<dbReference type="PROSITE" id="PS00175">
    <property type="entry name" value="PG_MUTASE"/>
    <property type="match status" value="1"/>
</dbReference>